<proteinExistence type="inferred from homology"/>
<dbReference type="EC" id="2.7.7.6" evidence="1"/>
<dbReference type="EMBL" id="CP000675">
    <property type="protein sequence ID" value="ABQ56920.1"/>
    <property type="status" value="ALT_INIT"/>
    <property type="molecule type" value="Genomic_DNA"/>
</dbReference>
<dbReference type="RefSeq" id="WP_032829172.1">
    <property type="nucleotide sequence ID" value="NZ_JAPMSS010000006.1"/>
</dbReference>
<dbReference type="SMR" id="A5IHS0"/>
<dbReference type="KEGG" id="lpc:LPC_3020"/>
<dbReference type="HOGENOM" id="CLU_000524_3_1_6"/>
<dbReference type="GO" id="GO:0000428">
    <property type="term" value="C:DNA-directed RNA polymerase complex"/>
    <property type="evidence" value="ECO:0007669"/>
    <property type="project" value="UniProtKB-KW"/>
</dbReference>
<dbReference type="GO" id="GO:0003677">
    <property type="term" value="F:DNA binding"/>
    <property type="evidence" value="ECO:0007669"/>
    <property type="project" value="UniProtKB-UniRule"/>
</dbReference>
<dbReference type="GO" id="GO:0003899">
    <property type="term" value="F:DNA-directed RNA polymerase activity"/>
    <property type="evidence" value="ECO:0007669"/>
    <property type="project" value="UniProtKB-UniRule"/>
</dbReference>
<dbReference type="GO" id="GO:0000287">
    <property type="term" value="F:magnesium ion binding"/>
    <property type="evidence" value="ECO:0007669"/>
    <property type="project" value="UniProtKB-UniRule"/>
</dbReference>
<dbReference type="GO" id="GO:0008270">
    <property type="term" value="F:zinc ion binding"/>
    <property type="evidence" value="ECO:0007669"/>
    <property type="project" value="UniProtKB-UniRule"/>
</dbReference>
<dbReference type="GO" id="GO:0006351">
    <property type="term" value="P:DNA-templated transcription"/>
    <property type="evidence" value="ECO:0007669"/>
    <property type="project" value="UniProtKB-UniRule"/>
</dbReference>
<dbReference type="CDD" id="cd02655">
    <property type="entry name" value="RNAP_beta'_C"/>
    <property type="match status" value="1"/>
</dbReference>
<dbReference type="CDD" id="cd01609">
    <property type="entry name" value="RNAP_beta'_N"/>
    <property type="match status" value="1"/>
</dbReference>
<dbReference type="FunFam" id="1.10.132.30:FF:000003">
    <property type="entry name" value="DNA-directed RNA polymerase subunit beta"/>
    <property type="match status" value="1"/>
</dbReference>
<dbReference type="FunFam" id="1.10.150.390:FF:000002">
    <property type="entry name" value="DNA-directed RNA polymerase subunit beta"/>
    <property type="match status" value="1"/>
</dbReference>
<dbReference type="FunFam" id="1.10.40.90:FF:000001">
    <property type="entry name" value="DNA-directed RNA polymerase subunit beta"/>
    <property type="match status" value="1"/>
</dbReference>
<dbReference type="Gene3D" id="1.10.132.30">
    <property type="match status" value="1"/>
</dbReference>
<dbReference type="Gene3D" id="1.10.150.390">
    <property type="match status" value="1"/>
</dbReference>
<dbReference type="Gene3D" id="1.10.1790.20">
    <property type="match status" value="1"/>
</dbReference>
<dbReference type="Gene3D" id="1.10.40.90">
    <property type="match status" value="1"/>
</dbReference>
<dbReference type="Gene3D" id="2.40.40.20">
    <property type="match status" value="1"/>
</dbReference>
<dbReference type="Gene3D" id="2.40.50.100">
    <property type="match status" value="3"/>
</dbReference>
<dbReference type="Gene3D" id="4.10.860.120">
    <property type="entry name" value="RNA polymerase II, clamp domain"/>
    <property type="match status" value="1"/>
</dbReference>
<dbReference type="Gene3D" id="1.10.274.100">
    <property type="entry name" value="RNA polymerase Rpb1, domain 3"/>
    <property type="match status" value="2"/>
</dbReference>
<dbReference type="HAMAP" id="MF_01322">
    <property type="entry name" value="RNApol_bact_RpoC"/>
    <property type="match status" value="1"/>
</dbReference>
<dbReference type="InterPro" id="IPR045867">
    <property type="entry name" value="DNA-dir_RpoC_beta_prime"/>
</dbReference>
<dbReference type="InterPro" id="IPR012754">
    <property type="entry name" value="DNA-dir_RpoC_beta_prime_bact"/>
</dbReference>
<dbReference type="InterPro" id="IPR000722">
    <property type="entry name" value="RNA_pol_asu"/>
</dbReference>
<dbReference type="InterPro" id="IPR006592">
    <property type="entry name" value="RNA_pol_N"/>
</dbReference>
<dbReference type="InterPro" id="IPR007080">
    <property type="entry name" value="RNA_pol_Rpb1_1"/>
</dbReference>
<dbReference type="InterPro" id="IPR007066">
    <property type="entry name" value="RNA_pol_Rpb1_3"/>
</dbReference>
<dbReference type="InterPro" id="IPR042102">
    <property type="entry name" value="RNA_pol_Rpb1_3_sf"/>
</dbReference>
<dbReference type="InterPro" id="IPR007083">
    <property type="entry name" value="RNA_pol_Rpb1_4"/>
</dbReference>
<dbReference type="InterPro" id="IPR007081">
    <property type="entry name" value="RNA_pol_Rpb1_5"/>
</dbReference>
<dbReference type="InterPro" id="IPR044893">
    <property type="entry name" value="RNA_pol_Rpb1_clamp_domain"/>
</dbReference>
<dbReference type="InterPro" id="IPR038120">
    <property type="entry name" value="Rpb1_funnel_sf"/>
</dbReference>
<dbReference type="NCBIfam" id="TIGR02386">
    <property type="entry name" value="rpoC_TIGR"/>
    <property type="match status" value="1"/>
</dbReference>
<dbReference type="PANTHER" id="PTHR19376">
    <property type="entry name" value="DNA-DIRECTED RNA POLYMERASE"/>
    <property type="match status" value="1"/>
</dbReference>
<dbReference type="PANTHER" id="PTHR19376:SF54">
    <property type="entry name" value="DNA-DIRECTED RNA POLYMERASE SUBUNIT BETA"/>
    <property type="match status" value="1"/>
</dbReference>
<dbReference type="Pfam" id="PF04997">
    <property type="entry name" value="RNA_pol_Rpb1_1"/>
    <property type="match status" value="1"/>
</dbReference>
<dbReference type="Pfam" id="PF00623">
    <property type="entry name" value="RNA_pol_Rpb1_2"/>
    <property type="match status" value="1"/>
</dbReference>
<dbReference type="Pfam" id="PF04983">
    <property type="entry name" value="RNA_pol_Rpb1_3"/>
    <property type="match status" value="1"/>
</dbReference>
<dbReference type="Pfam" id="PF05000">
    <property type="entry name" value="RNA_pol_Rpb1_4"/>
    <property type="match status" value="1"/>
</dbReference>
<dbReference type="Pfam" id="PF04998">
    <property type="entry name" value="RNA_pol_Rpb1_5"/>
    <property type="match status" value="1"/>
</dbReference>
<dbReference type="SMART" id="SM00663">
    <property type="entry name" value="RPOLA_N"/>
    <property type="match status" value="1"/>
</dbReference>
<dbReference type="SUPFAM" id="SSF64484">
    <property type="entry name" value="beta and beta-prime subunits of DNA dependent RNA-polymerase"/>
    <property type="match status" value="1"/>
</dbReference>
<sequence length="1401" mass="155626">MSDLLGILKQQGQSEEFDAIKIALASPELIRSWSYGEVKKPETINYRTFKPERDGLFCAKTFGPVKDYECLCGKYKRLKHRGVICEKCGVELALAKVRRERMGHIELASPVAHIWFLKSLPSRIGLLLDMTLRDIERVLYFEAFVVVDPGMTELERGQLLNDEAYLDAMEQYGDEFDARMGAEAIRDLLRQIDLEDEIRNLREELPTTNSETKIKKITKRLKLLEAFYESGNKPEWMIMDVLPVLPPDLRPLVPLDGGRFATSDLNDLYRRVINRNNRLKRLLDLNAPDIIVRNEKRMLQESVDALLDNGRRGRAITGTNKRPLKSLADMIKGKQGRFRQNLLGKRVDYSGRSVIVVGPTLKLHQCGLPKKMALELFKPFIFSKLEFRGLATTIKAAKKMVEREESVVWDILDDVIREHPILLNRAPTLHRLGIQAFEPVLIEGKAIQLHPLVCTAYNADFDGDQMAVHVPLTLEAQLEARSLMMSTNNILSPASGEPIIVPSQDVVLGLYYLTREKVNALGEGKIYSSAQEAQNFYEAGHLDIHAKIKIRMPKEDGETGYHLVETTVGRAILAEILPKGMPFDYINRTMTKKVISKVIDSCYRKFGLKETVIFADQLMYTGFKYATRSGASIGIEDMEIPDDKASIIEHADNEVREIESQFRSGLVTNGERYNKVIDIWSRTNELVAKSMMSKIATEEVTDAKGNKVRQESFNPIFMMADSGARGSAAQIRQLAGMRGLMAAPDGSIIETPITANFREGLNVFQYFISTHGARKGLADTALKTANSGYLTRRLVDVAQDVVITEDDCGTDTGILMQPLIEGGDIVEPLHERVLGRVVASDVYIPTQTEPVVKAGTLLDEEWVEKLEKHGVDQVMVRSPITCQTRFGLCAKCYGRDLARGHLVNTGEAVGIIAAQSIGEPGTQLTMRTFHIGGAASRATAANNIQIKTKGVIRLHNIKTVTHENKNLVAVSRSGEVTIVDEFGRERERYKVPYGAVISAQDNSPVEAGQVIATWDPHTHPVISEVSGRLKFVDLIDGITMNRQTDELTGLSNIVIIDAKQRSAAGRDLRPMVKLVTDEGDDIYLAGTNVPAQYYLPVDAIVNFEDGSLVGIGDVIARIPQERSKTRDITGGLPRVADLFEARKPKDSAVMAEVSGLVNFGKETKGKRRLIINVSEDQCHEELIPKWRHISVFEGEHVERGEIIAEGALNPHDILRLLGVGALANYIVNEVQDVYRLQGVKINDKHIEVIVRQMLRKRVITFAGDSKFLVGEQVEESAMLQENDKLLAEGKQIARGTPILLGITKASLATESFISAASFQETTRVLTEAAVSGKVDELRGLKENVMVGRLIPAGTGYTYHQSRKAKRARAAAGGDSSATHTVTASDVEHALSEALNADNHEH</sequence>
<evidence type="ECO:0000255" key="1">
    <source>
        <dbReference type="HAMAP-Rule" id="MF_01322"/>
    </source>
</evidence>
<evidence type="ECO:0000305" key="2"/>
<comment type="function">
    <text evidence="1">DNA-dependent RNA polymerase catalyzes the transcription of DNA into RNA using the four ribonucleoside triphosphates as substrates.</text>
</comment>
<comment type="catalytic activity">
    <reaction evidence="1">
        <text>RNA(n) + a ribonucleoside 5'-triphosphate = RNA(n+1) + diphosphate</text>
        <dbReference type="Rhea" id="RHEA:21248"/>
        <dbReference type="Rhea" id="RHEA-COMP:14527"/>
        <dbReference type="Rhea" id="RHEA-COMP:17342"/>
        <dbReference type="ChEBI" id="CHEBI:33019"/>
        <dbReference type="ChEBI" id="CHEBI:61557"/>
        <dbReference type="ChEBI" id="CHEBI:140395"/>
        <dbReference type="EC" id="2.7.7.6"/>
    </reaction>
</comment>
<comment type="cofactor">
    <cofactor evidence="1">
        <name>Mg(2+)</name>
        <dbReference type="ChEBI" id="CHEBI:18420"/>
    </cofactor>
    <text evidence="1">Binds 1 Mg(2+) ion per subunit.</text>
</comment>
<comment type="cofactor">
    <cofactor evidence="1">
        <name>Zn(2+)</name>
        <dbReference type="ChEBI" id="CHEBI:29105"/>
    </cofactor>
    <text evidence="1">Binds 2 Zn(2+) ions per subunit.</text>
</comment>
<comment type="subunit">
    <text evidence="1">The RNAP catalytic core consists of 2 alpha, 1 beta, 1 beta' and 1 omega subunit. When a sigma factor is associated with the core the holoenzyme is formed, which can initiate transcription.</text>
</comment>
<comment type="similarity">
    <text evidence="1">Belongs to the RNA polymerase beta' chain family.</text>
</comment>
<comment type="sequence caution" evidence="2">
    <conflict type="erroneous initiation">
        <sequence resource="EMBL-CDS" id="ABQ56920"/>
    </conflict>
    <text>Extended N-terminus.</text>
</comment>
<keyword id="KW-0240">DNA-directed RNA polymerase</keyword>
<keyword id="KW-0460">Magnesium</keyword>
<keyword id="KW-0479">Metal-binding</keyword>
<keyword id="KW-0548">Nucleotidyltransferase</keyword>
<keyword id="KW-0804">Transcription</keyword>
<keyword id="KW-0808">Transferase</keyword>
<keyword id="KW-0862">Zinc</keyword>
<gene>
    <name evidence="1" type="primary">rpoC</name>
    <name type="ordered locus">LPC_3020</name>
</gene>
<accession>A5IHS0</accession>
<name>RPOC_LEGPC</name>
<organism>
    <name type="scientific">Legionella pneumophila (strain Corby)</name>
    <dbReference type="NCBI Taxonomy" id="400673"/>
    <lineage>
        <taxon>Bacteria</taxon>
        <taxon>Pseudomonadati</taxon>
        <taxon>Pseudomonadota</taxon>
        <taxon>Gammaproteobacteria</taxon>
        <taxon>Legionellales</taxon>
        <taxon>Legionellaceae</taxon>
        <taxon>Legionella</taxon>
    </lineage>
</organism>
<feature type="chain" id="PRO_0000353386" description="DNA-directed RNA polymerase subunit beta'">
    <location>
        <begin position="1"/>
        <end position="1401"/>
    </location>
</feature>
<feature type="binding site" evidence="1">
    <location>
        <position position="70"/>
    </location>
    <ligand>
        <name>Zn(2+)</name>
        <dbReference type="ChEBI" id="CHEBI:29105"/>
        <label>1</label>
    </ligand>
</feature>
<feature type="binding site" evidence="1">
    <location>
        <position position="72"/>
    </location>
    <ligand>
        <name>Zn(2+)</name>
        <dbReference type="ChEBI" id="CHEBI:29105"/>
        <label>1</label>
    </ligand>
</feature>
<feature type="binding site" evidence="1">
    <location>
        <position position="85"/>
    </location>
    <ligand>
        <name>Zn(2+)</name>
        <dbReference type="ChEBI" id="CHEBI:29105"/>
        <label>1</label>
    </ligand>
</feature>
<feature type="binding site" evidence="1">
    <location>
        <position position="88"/>
    </location>
    <ligand>
        <name>Zn(2+)</name>
        <dbReference type="ChEBI" id="CHEBI:29105"/>
        <label>1</label>
    </ligand>
</feature>
<feature type="binding site" evidence="1">
    <location>
        <position position="460"/>
    </location>
    <ligand>
        <name>Mg(2+)</name>
        <dbReference type="ChEBI" id="CHEBI:18420"/>
    </ligand>
</feature>
<feature type="binding site" evidence="1">
    <location>
        <position position="462"/>
    </location>
    <ligand>
        <name>Mg(2+)</name>
        <dbReference type="ChEBI" id="CHEBI:18420"/>
    </ligand>
</feature>
<feature type="binding site" evidence="1">
    <location>
        <position position="464"/>
    </location>
    <ligand>
        <name>Mg(2+)</name>
        <dbReference type="ChEBI" id="CHEBI:18420"/>
    </ligand>
</feature>
<feature type="binding site" evidence="1">
    <location>
        <position position="808"/>
    </location>
    <ligand>
        <name>Zn(2+)</name>
        <dbReference type="ChEBI" id="CHEBI:29105"/>
        <label>2</label>
    </ligand>
</feature>
<feature type="binding site" evidence="1">
    <location>
        <position position="882"/>
    </location>
    <ligand>
        <name>Zn(2+)</name>
        <dbReference type="ChEBI" id="CHEBI:29105"/>
        <label>2</label>
    </ligand>
</feature>
<feature type="binding site" evidence="1">
    <location>
        <position position="889"/>
    </location>
    <ligand>
        <name>Zn(2+)</name>
        <dbReference type="ChEBI" id="CHEBI:29105"/>
        <label>2</label>
    </ligand>
</feature>
<feature type="binding site" evidence="1">
    <location>
        <position position="892"/>
    </location>
    <ligand>
        <name>Zn(2+)</name>
        <dbReference type="ChEBI" id="CHEBI:29105"/>
        <label>2</label>
    </ligand>
</feature>
<protein>
    <recommendedName>
        <fullName evidence="1">DNA-directed RNA polymerase subunit beta'</fullName>
        <shortName evidence="1">RNAP subunit beta'</shortName>
        <ecNumber evidence="1">2.7.7.6</ecNumber>
    </recommendedName>
    <alternativeName>
        <fullName evidence="1">RNA polymerase subunit beta'</fullName>
    </alternativeName>
    <alternativeName>
        <fullName evidence="1">Transcriptase subunit beta'</fullName>
    </alternativeName>
</protein>
<reference key="1">
    <citation type="submission" date="2006-11" db="EMBL/GenBank/DDBJ databases">
        <title>Identification and characterization of a new conjugation/ type IVA secretion system (trb/tra) of L. pneumophila Corby localized on a mobile genomic island.</title>
        <authorList>
            <person name="Gloeckner G."/>
            <person name="Albert-Weissenberger C."/>
            <person name="Weinmann E."/>
            <person name="Jacobi S."/>
            <person name="Schunder E."/>
            <person name="Steinert M."/>
            <person name="Buchrieser C."/>
            <person name="Hacker J."/>
            <person name="Heuner K."/>
        </authorList>
    </citation>
    <scope>NUCLEOTIDE SEQUENCE [LARGE SCALE GENOMIC DNA]</scope>
    <source>
        <strain>Corby</strain>
    </source>
</reference>